<accession>C1BZU2</accession>
<name>UFC1_ESOLU</name>
<sequence>MADDATRKAVSEIPLLKTNSGPRDKELWVQRLREEYLAPIKYVENNKAADNDWFRLESNKEGTRWFGKCWYIHDLLKYEFDIEFDIPVTYPTTAPEVAIPELDGKTAKMYRGGKICLTDHFKPLWARNVPKFGLAHLMALGLGPWLAVEIPDLISKGLITHREQQGS</sequence>
<gene>
    <name evidence="1" type="primary">ufc1</name>
</gene>
<reference key="1">
    <citation type="journal article" date="2010" name="BMC Genomics">
        <title>Salmo salar and Esox lucius full-length cDNA sequences reveal changes in evolutionary pressures on a post-tetraploidization genome.</title>
        <authorList>
            <person name="Leong J.S."/>
            <person name="Jantzen S.G."/>
            <person name="von Schalburg K.R."/>
            <person name="Cooper G.A."/>
            <person name="Messmer A.M."/>
            <person name="Liao N.Y."/>
            <person name="Munro S."/>
            <person name="Moore R."/>
            <person name="Holt R.A."/>
            <person name="Jones S.J."/>
            <person name="Davidson W.S."/>
            <person name="Koop B.F."/>
        </authorList>
    </citation>
    <scope>NUCLEOTIDE SEQUENCE [LARGE SCALE MRNA]</scope>
    <source>
        <tissue>Kidney</tissue>
    </source>
</reference>
<comment type="function">
    <text evidence="1">E2-like enzyme which specifically catalyzes the second step in ufmylation. Accepts the ubiquitin-like modifier UFM1 from the E1 enzyme UBA5 and forms an intermediate with UFM1 via a thioester linkage. Ufmylation is involved in various processes, such as ribosome recycling, response to DNA damage, interferon response or reticulophagy (also called ER-phagy).</text>
</comment>
<comment type="subunit">
    <text evidence="1">Interacts with UBA5 (via C-terminus). Interacts with UFL1. Interacts with UFM1.</text>
</comment>
<comment type="similarity">
    <text evidence="2">Belongs to the ubiquitin-conjugating enzyme family. UFC1 subfamily.</text>
</comment>
<organism>
    <name type="scientific">Esox lucius</name>
    <name type="common">Northern pike</name>
    <dbReference type="NCBI Taxonomy" id="8010"/>
    <lineage>
        <taxon>Eukaryota</taxon>
        <taxon>Metazoa</taxon>
        <taxon>Chordata</taxon>
        <taxon>Craniata</taxon>
        <taxon>Vertebrata</taxon>
        <taxon>Euteleostomi</taxon>
        <taxon>Actinopterygii</taxon>
        <taxon>Neopterygii</taxon>
        <taxon>Teleostei</taxon>
        <taxon>Protacanthopterygii</taxon>
        <taxon>Esociformes</taxon>
        <taxon>Esocidae</taxon>
        <taxon>Esox</taxon>
    </lineage>
</organism>
<keyword id="KW-1185">Reference proteome</keyword>
<keyword id="KW-0833">Ubl conjugation pathway</keyword>
<evidence type="ECO:0000250" key="1">
    <source>
        <dbReference type="UniProtKB" id="Q9Y3C8"/>
    </source>
</evidence>
<evidence type="ECO:0000305" key="2"/>
<protein>
    <recommendedName>
        <fullName evidence="2">Ubiquitin-fold modifier-conjugating enzyme 1</fullName>
    </recommendedName>
    <alternativeName>
        <fullName evidence="1">Ufm1-conjugating enzyme 1</fullName>
    </alternativeName>
</protein>
<feature type="chain" id="PRO_0000391956" description="Ubiquitin-fold modifier-conjugating enzyme 1">
    <location>
        <begin position="1"/>
        <end position="167"/>
    </location>
</feature>
<feature type="active site" description="Glycyl thioester intermediate" evidence="1">
    <location>
        <position position="116"/>
    </location>
</feature>
<proteinExistence type="evidence at transcript level"/>
<dbReference type="EMBL" id="BT080121">
    <property type="protein sequence ID" value="ACO14545.1"/>
    <property type="molecule type" value="mRNA"/>
</dbReference>
<dbReference type="RefSeq" id="NP_001290731.1">
    <property type="nucleotide sequence ID" value="NM_001303802.1"/>
</dbReference>
<dbReference type="SMR" id="C1BZU2"/>
<dbReference type="FunCoup" id="C1BZU2">
    <property type="interactions" value="1353"/>
</dbReference>
<dbReference type="STRING" id="8010.ENSELUP00000010770"/>
<dbReference type="GeneID" id="105005635"/>
<dbReference type="KEGG" id="els:105005635"/>
<dbReference type="CTD" id="51506"/>
<dbReference type="InParanoid" id="C1BZU2"/>
<dbReference type="OrthoDB" id="10256182at2759"/>
<dbReference type="Proteomes" id="UP000265140">
    <property type="component" value="Unassembled WGS sequence"/>
</dbReference>
<dbReference type="GO" id="GO:0005737">
    <property type="term" value="C:cytoplasm"/>
    <property type="evidence" value="ECO:0007669"/>
    <property type="project" value="TreeGrafter"/>
</dbReference>
<dbReference type="GO" id="GO:0061657">
    <property type="term" value="F:UFM1 conjugating enzyme activity"/>
    <property type="evidence" value="ECO:0000250"/>
    <property type="project" value="UniProtKB"/>
</dbReference>
<dbReference type="GO" id="GO:1990592">
    <property type="term" value="P:protein K69-linked ufmylation"/>
    <property type="evidence" value="ECO:0007669"/>
    <property type="project" value="TreeGrafter"/>
</dbReference>
<dbReference type="GO" id="GO:0071569">
    <property type="term" value="P:protein ufmylation"/>
    <property type="evidence" value="ECO:0000250"/>
    <property type="project" value="UniProtKB"/>
</dbReference>
<dbReference type="GO" id="GO:0034976">
    <property type="term" value="P:response to endoplasmic reticulum stress"/>
    <property type="evidence" value="ECO:0000250"/>
    <property type="project" value="UniProtKB"/>
</dbReference>
<dbReference type="GO" id="GO:0061709">
    <property type="term" value="P:reticulophagy"/>
    <property type="evidence" value="ECO:0000250"/>
    <property type="project" value="UniProtKB"/>
</dbReference>
<dbReference type="CDD" id="cd11686">
    <property type="entry name" value="UBCc_UFC1"/>
    <property type="match status" value="1"/>
</dbReference>
<dbReference type="FunFam" id="3.10.110.10:FF:000042">
    <property type="entry name" value="Ubiquitin-fold modifier-conjugating enzyme 1"/>
    <property type="match status" value="1"/>
</dbReference>
<dbReference type="Gene3D" id="3.10.110.10">
    <property type="entry name" value="Ubiquitin Conjugating Enzyme"/>
    <property type="match status" value="1"/>
</dbReference>
<dbReference type="InterPro" id="IPR016135">
    <property type="entry name" value="UBQ-conjugating_enzyme/RWD"/>
</dbReference>
<dbReference type="InterPro" id="IPR014806">
    <property type="entry name" value="Ufc1"/>
</dbReference>
<dbReference type="PANTHER" id="PTHR12921">
    <property type="entry name" value="UBIQUITIN-FOLD MODIFIER-CONJUGATING ENZYME 1"/>
    <property type="match status" value="1"/>
</dbReference>
<dbReference type="PANTHER" id="PTHR12921:SF0">
    <property type="entry name" value="UBIQUITIN-FOLD MODIFIER-CONJUGATING ENZYME 1"/>
    <property type="match status" value="1"/>
</dbReference>
<dbReference type="Pfam" id="PF08694">
    <property type="entry name" value="UFC1"/>
    <property type="match status" value="1"/>
</dbReference>
<dbReference type="PIRSF" id="PIRSF008716">
    <property type="entry name" value="DUF1782"/>
    <property type="match status" value="1"/>
</dbReference>
<dbReference type="SUPFAM" id="SSF54495">
    <property type="entry name" value="UBC-like"/>
    <property type="match status" value="1"/>
</dbReference>